<comment type="function">
    <text evidence="1">Part of a membrane-bound complex that couples electron transfer with translocation of ions across the membrane. Required to maintain the reduced state of SoxR.</text>
</comment>
<comment type="cofactor">
    <cofactor evidence="1">
        <name>[4Fe-4S] cluster</name>
        <dbReference type="ChEBI" id="CHEBI:49883"/>
    </cofactor>
    <text evidence="1">Binds 3 [4Fe-4S] clusters.</text>
</comment>
<comment type="subunit">
    <text evidence="1">The complex is composed of six subunits: RsxA, RsxB, RsxC, RsxD, RsxE and RsxG.</text>
</comment>
<comment type="subcellular location">
    <subcellularLocation>
        <location evidence="1">Cell inner membrane</location>
    </subcellularLocation>
</comment>
<comment type="similarity">
    <text evidence="1">Belongs to the 4Fe4S bacterial-type ferredoxin family. RnfB subfamily.</text>
</comment>
<gene>
    <name evidence="1" type="primary">rsxB</name>
    <name type="ordered locus">EFER_1415</name>
</gene>
<organism>
    <name type="scientific">Escherichia fergusonii (strain ATCC 35469 / DSM 13698 / CCUG 18766 / IAM 14443 / JCM 21226 / LMG 7866 / NBRC 102419 / NCTC 12128 / CDC 0568-73)</name>
    <dbReference type="NCBI Taxonomy" id="585054"/>
    <lineage>
        <taxon>Bacteria</taxon>
        <taxon>Pseudomonadati</taxon>
        <taxon>Pseudomonadota</taxon>
        <taxon>Gammaproteobacteria</taxon>
        <taxon>Enterobacterales</taxon>
        <taxon>Enterobacteriaceae</taxon>
        <taxon>Escherichia</taxon>
    </lineage>
</organism>
<dbReference type="EC" id="7.-.-.-" evidence="1"/>
<dbReference type="EMBL" id="CU928158">
    <property type="protein sequence ID" value="CAQ88935.1"/>
    <property type="molecule type" value="Genomic_DNA"/>
</dbReference>
<dbReference type="RefSeq" id="WP_001092589.1">
    <property type="nucleotide sequence ID" value="NC_011740.1"/>
</dbReference>
<dbReference type="GeneID" id="75057539"/>
<dbReference type="KEGG" id="efe:EFER_1415"/>
<dbReference type="HOGENOM" id="CLU_063448_2_0_6"/>
<dbReference type="OrthoDB" id="9789936at2"/>
<dbReference type="Proteomes" id="UP000000745">
    <property type="component" value="Chromosome"/>
</dbReference>
<dbReference type="GO" id="GO:0005886">
    <property type="term" value="C:plasma membrane"/>
    <property type="evidence" value="ECO:0007669"/>
    <property type="project" value="UniProtKB-SubCell"/>
</dbReference>
<dbReference type="GO" id="GO:0051539">
    <property type="term" value="F:4 iron, 4 sulfur cluster binding"/>
    <property type="evidence" value="ECO:0007669"/>
    <property type="project" value="UniProtKB-UniRule"/>
</dbReference>
<dbReference type="GO" id="GO:0009055">
    <property type="term" value="F:electron transfer activity"/>
    <property type="evidence" value="ECO:0007669"/>
    <property type="project" value="InterPro"/>
</dbReference>
<dbReference type="GO" id="GO:0046872">
    <property type="term" value="F:metal ion binding"/>
    <property type="evidence" value="ECO:0007669"/>
    <property type="project" value="UniProtKB-KW"/>
</dbReference>
<dbReference type="GO" id="GO:0022900">
    <property type="term" value="P:electron transport chain"/>
    <property type="evidence" value="ECO:0007669"/>
    <property type="project" value="UniProtKB-UniRule"/>
</dbReference>
<dbReference type="FunFam" id="1.10.15.40:FF:000001">
    <property type="entry name" value="Ion-translocating oxidoreductase complex subunit B"/>
    <property type="match status" value="1"/>
</dbReference>
<dbReference type="Gene3D" id="3.30.70.20">
    <property type="match status" value="1"/>
</dbReference>
<dbReference type="Gene3D" id="1.10.15.40">
    <property type="entry name" value="Electron transport complex subunit B, putative Fe-S cluster"/>
    <property type="match status" value="1"/>
</dbReference>
<dbReference type="HAMAP" id="MF_00463">
    <property type="entry name" value="RsxB_RnfB"/>
    <property type="match status" value="1"/>
</dbReference>
<dbReference type="InterPro" id="IPR007202">
    <property type="entry name" value="4Fe-4S_dom"/>
</dbReference>
<dbReference type="InterPro" id="IPR017896">
    <property type="entry name" value="4Fe4S_Fe-S-bd"/>
</dbReference>
<dbReference type="InterPro" id="IPR017900">
    <property type="entry name" value="4Fe4S_Fe_S_CS"/>
</dbReference>
<dbReference type="InterPro" id="IPR050395">
    <property type="entry name" value="4Fe4S_Ferredoxin_RnfB"/>
</dbReference>
<dbReference type="InterPro" id="IPR010207">
    <property type="entry name" value="Elect_transpt_cplx_RnfB/RsxB"/>
</dbReference>
<dbReference type="InterPro" id="IPR016463">
    <property type="entry name" value="RnfB/RsxB_Proteobac"/>
</dbReference>
<dbReference type="NCBIfam" id="NF003475">
    <property type="entry name" value="PRK05113.1"/>
    <property type="match status" value="1"/>
</dbReference>
<dbReference type="NCBIfam" id="TIGR01944">
    <property type="entry name" value="rnfB"/>
    <property type="match status" value="1"/>
</dbReference>
<dbReference type="PANTHER" id="PTHR43560">
    <property type="entry name" value="ION-TRANSLOCATING OXIDOREDUCTASE COMPLEX SUBUNIT B"/>
    <property type="match status" value="1"/>
</dbReference>
<dbReference type="PANTHER" id="PTHR43560:SF1">
    <property type="entry name" value="ION-TRANSLOCATING OXIDOREDUCTASE COMPLEX SUBUNIT B"/>
    <property type="match status" value="1"/>
</dbReference>
<dbReference type="Pfam" id="PF14697">
    <property type="entry name" value="Fer4_21"/>
    <property type="match status" value="1"/>
</dbReference>
<dbReference type="Pfam" id="PF04060">
    <property type="entry name" value="FeS"/>
    <property type="match status" value="1"/>
</dbReference>
<dbReference type="PIRSF" id="PIRSF005784">
    <property type="entry name" value="Elect_transpt_RnfB"/>
    <property type="match status" value="1"/>
</dbReference>
<dbReference type="SUPFAM" id="SSF54862">
    <property type="entry name" value="4Fe-4S ferredoxins"/>
    <property type="match status" value="1"/>
</dbReference>
<dbReference type="PROSITE" id="PS51656">
    <property type="entry name" value="4FE4S"/>
    <property type="match status" value="1"/>
</dbReference>
<dbReference type="PROSITE" id="PS00198">
    <property type="entry name" value="4FE4S_FER_1"/>
    <property type="match status" value="2"/>
</dbReference>
<dbReference type="PROSITE" id="PS51379">
    <property type="entry name" value="4FE4S_FER_2"/>
    <property type="match status" value="2"/>
</dbReference>
<proteinExistence type="inferred from homology"/>
<evidence type="ECO:0000255" key="1">
    <source>
        <dbReference type="HAMAP-Rule" id="MF_00463"/>
    </source>
</evidence>
<keyword id="KW-0004">4Fe-4S</keyword>
<keyword id="KW-0997">Cell inner membrane</keyword>
<keyword id="KW-1003">Cell membrane</keyword>
<keyword id="KW-0249">Electron transport</keyword>
<keyword id="KW-0408">Iron</keyword>
<keyword id="KW-0411">Iron-sulfur</keyword>
<keyword id="KW-0472">Membrane</keyword>
<keyword id="KW-0479">Metal-binding</keyword>
<keyword id="KW-0677">Repeat</keyword>
<keyword id="KW-1278">Translocase</keyword>
<keyword id="KW-0813">Transport</keyword>
<accession>B7LQP2</accession>
<reference key="1">
    <citation type="journal article" date="2009" name="PLoS Genet.">
        <title>Organised genome dynamics in the Escherichia coli species results in highly diverse adaptive paths.</title>
        <authorList>
            <person name="Touchon M."/>
            <person name="Hoede C."/>
            <person name="Tenaillon O."/>
            <person name="Barbe V."/>
            <person name="Baeriswyl S."/>
            <person name="Bidet P."/>
            <person name="Bingen E."/>
            <person name="Bonacorsi S."/>
            <person name="Bouchier C."/>
            <person name="Bouvet O."/>
            <person name="Calteau A."/>
            <person name="Chiapello H."/>
            <person name="Clermont O."/>
            <person name="Cruveiller S."/>
            <person name="Danchin A."/>
            <person name="Diard M."/>
            <person name="Dossat C."/>
            <person name="Karoui M.E."/>
            <person name="Frapy E."/>
            <person name="Garry L."/>
            <person name="Ghigo J.M."/>
            <person name="Gilles A.M."/>
            <person name="Johnson J."/>
            <person name="Le Bouguenec C."/>
            <person name="Lescat M."/>
            <person name="Mangenot S."/>
            <person name="Martinez-Jehanne V."/>
            <person name="Matic I."/>
            <person name="Nassif X."/>
            <person name="Oztas S."/>
            <person name="Petit M.A."/>
            <person name="Pichon C."/>
            <person name="Rouy Z."/>
            <person name="Ruf C.S."/>
            <person name="Schneider D."/>
            <person name="Tourret J."/>
            <person name="Vacherie B."/>
            <person name="Vallenet D."/>
            <person name="Medigue C."/>
            <person name="Rocha E.P.C."/>
            <person name="Denamur E."/>
        </authorList>
    </citation>
    <scope>NUCLEOTIDE SEQUENCE [LARGE SCALE GENOMIC DNA]</scope>
    <source>
        <strain>ATCC 35469 / DSM 13698 / BCRC 15582 / CCUG 18766 / IAM 14443 / JCM 21226 / LMG 7866 / NBRC 102419 / NCTC 12128 / CDC 0568-73</strain>
    </source>
</reference>
<sequence length="192" mass="20591">MNTIWIAVAAISLLGLAFGAILGYASRRFAVEDDPVVEKIDEILPQSQCGQCGYPGCRPYAEAISCNGEKINRCAPGGEAVMLKISELLNVEPQPIDGEEQELAPARVVAVIDENNCIGCTKCIQACPVDAIVGATRAMHTVMSDLCTGCNLCVDPCPTQCISLQPVAETPDSWKWDLNTIPVRIIPVEHHA</sequence>
<name>RSXB_ESCF3</name>
<feature type="chain" id="PRO_1000194485" description="Ion-translocating oxidoreductase complex subunit B">
    <location>
        <begin position="1"/>
        <end position="192"/>
    </location>
</feature>
<feature type="domain" description="4Fe-4S" evidence="1">
    <location>
        <begin position="32"/>
        <end position="91"/>
    </location>
</feature>
<feature type="domain" description="4Fe-4S ferredoxin-type 1" evidence="1">
    <location>
        <begin position="108"/>
        <end position="137"/>
    </location>
</feature>
<feature type="domain" description="4Fe-4S ferredoxin-type 2" evidence="1">
    <location>
        <begin position="138"/>
        <end position="167"/>
    </location>
</feature>
<feature type="region of interest" description="Hydrophobic" evidence="1">
    <location>
        <begin position="1"/>
        <end position="26"/>
    </location>
</feature>
<feature type="binding site" evidence="1">
    <location>
        <position position="49"/>
    </location>
    <ligand>
        <name>[4Fe-4S] cluster</name>
        <dbReference type="ChEBI" id="CHEBI:49883"/>
        <label>1</label>
    </ligand>
</feature>
<feature type="binding site" evidence="1">
    <location>
        <position position="52"/>
    </location>
    <ligand>
        <name>[4Fe-4S] cluster</name>
        <dbReference type="ChEBI" id="CHEBI:49883"/>
        <label>1</label>
    </ligand>
</feature>
<feature type="binding site" evidence="1">
    <location>
        <position position="57"/>
    </location>
    <ligand>
        <name>[4Fe-4S] cluster</name>
        <dbReference type="ChEBI" id="CHEBI:49883"/>
        <label>1</label>
    </ligand>
</feature>
<feature type="binding site" evidence="1">
    <location>
        <position position="74"/>
    </location>
    <ligand>
        <name>[4Fe-4S] cluster</name>
        <dbReference type="ChEBI" id="CHEBI:49883"/>
        <label>1</label>
    </ligand>
</feature>
<feature type="binding site" evidence="1">
    <location>
        <position position="117"/>
    </location>
    <ligand>
        <name>[4Fe-4S] cluster</name>
        <dbReference type="ChEBI" id="CHEBI:49883"/>
        <label>2</label>
    </ligand>
</feature>
<feature type="binding site" evidence="1">
    <location>
        <position position="120"/>
    </location>
    <ligand>
        <name>[4Fe-4S] cluster</name>
        <dbReference type="ChEBI" id="CHEBI:49883"/>
        <label>2</label>
    </ligand>
</feature>
<feature type="binding site" evidence="1">
    <location>
        <position position="123"/>
    </location>
    <ligand>
        <name>[4Fe-4S] cluster</name>
        <dbReference type="ChEBI" id="CHEBI:49883"/>
        <label>2</label>
    </ligand>
</feature>
<feature type="binding site" evidence="1">
    <location>
        <position position="127"/>
    </location>
    <ligand>
        <name>[4Fe-4S] cluster</name>
        <dbReference type="ChEBI" id="CHEBI:49883"/>
        <label>3</label>
    </ligand>
</feature>
<feature type="binding site" evidence="1">
    <location>
        <position position="147"/>
    </location>
    <ligand>
        <name>[4Fe-4S] cluster</name>
        <dbReference type="ChEBI" id="CHEBI:49883"/>
        <label>3</label>
    </ligand>
</feature>
<feature type="binding site" evidence="1">
    <location>
        <position position="150"/>
    </location>
    <ligand>
        <name>[4Fe-4S] cluster</name>
        <dbReference type="ChEBI" id="CHEBI:49883"/>
        <label>3</label>
    </ligand>
</feature>
<feature type="binding site" evidence="1">
    <location>
        <position position="153"/>
    </location>
    <ligand>
        <name>[4Fe-4S] cluster</name>
        <dbReference type="ChEBI" id="CHEBI:49883"/>
        <label>3</label>
    </ligand>
</feature>
<feature type="binding site" evidence="1">
    <location>
        <position position="157"/>
    </location>
    <ligand>
        <name>[4Fe-4S] cluster</name>
        <dbReference type="ChEBI" id="CHEBI:49883"/>
        <label>2</label>
    </ligand>
</feature>
<protein>
    <recommendedName>
        <fullName evidence="1">Ion-translocating oxidoreductase complex subunit B</fullName>
        <ecNumber evidence="1">7.-.-.-</ecNumber>
    </recommendedName>
    <alternativeName>
        <fullName evidence="1">Rsx electron transport complex subunit B</fullName>
    </alternativeName>
</protein>